<gene>
    <name evidence="1" type="primary">dapE</name>
    <name type="ordered locus">RC1347</name>
</gene>
<reference key="1">
    <citation type="journal article" date="2001" name="Science">
        <title>Mechanisms of evolution in Rickettsia conorii and R. prowazekii.</title>
        <authorList>
            <person name="Ogata H."/>
            <person name="Audic S."/>
            <person name="Renesto-Audiffren P."/>
            <person name="Fournier P.-E."/>
            <person name="Barbe V."/>
            <person name="Samson D."/>
            <person name="Roux V."/>
            <person name="Cossart P."/>
            <person name="Weissenbach J."/>
            <person name="Claverie J.-M."/>
            <person name="Raoult D."/>
        </authorList>
    </citation>
    <scope>NUCLEOTIDE SEQUENCE [LARGE SCALE GENOMIC DNA]</scope>
    <source>
        <strain>ATCC VR-613 / Malish 7</strain>
    </source>
</reference>
<keyword id="KW-0028">Amino-acid biosynthesis</keyword>
<keyword id="KW-0170">Cobalt</keyword>
<keyword id="KW-0220">Diaminopimelate biosynthesis</keyword>
<keyword id="KW-0378">Hydrolase</keyword>
<keyword id="KW-0457">Lysine biosynthesis</keyword>
<keyword id="KW-0479">Metal-binding</keyword>
<keyword id="KW-0862">Zinc</keyword>
<proteinExistence type="inferred from homology"/>
<feature type="chain" id="PRO_0000375701" description="Succinyl-diaminopimelate desuccinylase">
    <location>
        <begin position="1"/>
        <end position="381"/>
    </location>
</feature>
<feature type="active site" evidence="1">
    <location>
        <position position="71"/>
    </location>
</feature>
<feature type="active site" description="Proton acceptor" evidence="1">
    <location>
        <position position="137"/>
    </location>
</feature>
<feature type="binding site" evidence="1">
    <location>
        <position position="69"/>
    </location>
    <ligand>
        <name>Zn(2+)</name>
        <dbReference type="ChEBI" id="CHEBI:29105"/>
        <label>1</label>
    </ligand>
</feature>
<feature type="binding site" evidence="1">
    <location>
        <position position="103"/>
    </location>
    <ligand>
        <name>Zn(2+)</name>
        <dbReference type="ChEBI" id="CHEBI:29105"/>
        <label>1</label>
    </ligand>
</feature>
<feature type="binding site" evidence="1">
    <location>
        <position position="103"/>
    </location>
    <ligand>
        <name>Zn(2+)</name>
        <dbReference type="ChEBI" id="CHEBI:29105"/>
        <label>2</label>
    </ligand>
</feature>
<feature type="binding site" evidence="1">
    <location>
        <position position="138"/>
    </location>
    <ligand>
        <name>Zn(2+)</name>
        <dbReference type="ChEBI" id="CHEBI:29105"/>
        <label>2</label>
    </ligand>
</feature>
<feature type="binding site" evidence="1">
    <location>
        <position position="166"/>
    </location>
    <ligand>
        <name>Zn(2+)</name>
        <dbReference type="ChEBI" id="CHEBI:29105"/>
        <label>1</label>
    </ligand>
</feature>
<feature type="binding site" evidence="1">
    <location>
        <position position="355"/>
    </location>
    <ligand>
        <name>Zn(2+)</name>
        <dbReference type="ChEBI" id="CHEBI:29105"/>
        <label>2</label>
    </ligand>
</feature>
<accession>Q92FY0</accession>
<sequence length="381" mass="42797">MYINYLKDLIGFKSVTPKSDGAIEYINDLLKQHGFKTEIKIFGDSKSEQVTNLYAVFGSNEPNICFVGHVDVVLAGNHELWHNASPFKVSQQDGKIYGRGAVDMKGAIACFLAASLDFIKNNTDFKGSISFLLTSDEEGKAKHGTKEMLQYIYDQGYKINFAIVGEPTCEKEIGDAIKIGRRGSVNFKLNIEGLSGHVAYPHKANNPLPCLIIILNELTNIKLDEGTEFFQRSNLEVTNIEVSNNTSNVIPASTEASFNIRFNNLHSAETLAKQVEEIIKQHCKEYKVDYKLEYSSSAESFIQNPSDKIKEFAKVVEHTLKIKPEFSTSGGTSDARFVKNYCPLVEFGLLSETAHKINEYTKISDLQKLYDVYYNFLMEIL</sequence>
<dbReference type="EC" id="3.5.1.18" evidence="1"/>
<dbReference type="EMBL" id="AE006914">
    <property type="protein sequence ID" value="AAL03885.1"/>
    <property type="status" value="ALT_INIT"/>
    <property type="molecule type" value="Genomic_DNA"/>
</dbReference>
<dbReference type="PIR" id="C97868">
    <property type="entry name" value="C97868"/>
</dbReference>
<dbReference type="RefSeq" id="WP_012720113.1">
    <property type="nucleotide sequence ID" value="NC_003103.1"/>
</dbReference>
<dbReference type="SMR" id="Q92FY0"/>
<dbReference type="GeneID" id="928496"/>
<dbReference type="KEGG" id="rco:RC1347"/>
<dbReference type="HOGENOM" id="CLU_021802_4_0_5"/>
<dbReference type="UniPathway" id="UPA00034">
    <property type="reaction ID" value="UER00021"/>
</dbReference>
<dbReference type="Proteomes" id="UP000000816">
    <property type="component" value="Chromosome"/>
</dbReference>
<dbReference type="GO" id="GO:0008777">
    <property type="term" value="F:acetylornithine deacetylase activity"/>
    <property type="evidence" value="ECO:0007669"/>
    <property type="project" value="TreeGrafter"/>
</dbReference>
<dbReference type="GO" id="GO:0050897">
    <property type="term" value="F:cobalt ion binding"/>
    <property type="evidence" value="ECO:0007669"/>
    <property type="project" value="UniProtKB-UniRule"/>
</dbReference>
<dbReference type="GO" id="GO:0009014">
    <property type="term" value="F:succinyl-diaminopimelate desuccinylase activity"/>
    <property type="evidence" value="ECO:0007669"/>
    <property type="project" value="UniProtKB-UniRule"/>
</dbReference>
<dbReference type="GO" id="GO:0008270">
    <property type="term" value="F:zinc ion binding"/>
    <property type="evidence" value="ECO:0007669"/>
    <property type="project" value="UniProtKB-UniRule"/>
</dbReference>
<dbReference type="GO" id="GO:0019877">
    <property type="term" value="P:diaminopimelate biosynthetic process"/>
    <property type="evidence" value="ECO:0007669"/>
    <property type="project" value="UniProtKB-UniRule"/>
</dbReference>
<dbReference type="GO" id="GO:0006526">
    <property type="term" value="P:L-arginine biosynthetic process"/>
    <property type="evidence" value="ECO:0007669"/>
    <property type="project" value="TreeGrafter"/>
</dbReference>
<dbReference type="GO" id="GO:0009089">
    <property type="term" value="P:lysine biosynthetic process via diaminopimelate"/>
    <property type="evidence" value="ECO:0007669"/>
    <property type="project" value="UniProtKB-UniRule"/>
</dbReference>
<dbReference type="CDD" id="cd03891">
    <property type="entry name" value="M20_DapE_proteobac"/>
    <property type="match status" value="1"/>
</dbReference>
<dbReference type="Gene3D" id="3.30.70.360">
    <property type="match status" value="1"/>
</dbReference>
<dbReference type="Gene3D" id="3.40.630.10">
    <property type="entry name" value="Zn peptidases"/>
    <property type="match status" value="1"/>
</dbReference>
<dbReference type="HAMAP" id="MF_01690">
    <property type="entry name" value="DapE"/>
    <property type="match status" value="1"/>
</dbReference>
<dbReference type="InterPro" id="IPR001261">
    <property type="entry name" value="ArgE/DapE_CS"/>
</dbReference>
<dbReference type="InterPro" id="IPR036264">
    <property type="entry name" value="Bact_exopeptidase_dim_dom"/>
</dbReference>
<dbReference type="InterPro" id="IPR005941">
    <property type="entry name" value="DapE_proteobac"/>
</dbReference>
<dbReference type="InterPro" id="IPR002933">
    <property type="entry name" value="Peptidase_M20"/>
</dbReference>
<dbReference type="InterPro" id="IPR011650">
    <property type="entry name" value="Peptidase_M20_dimer"/>
</dbReference>
<dbReference type="InterPro" id="IPR050072">
    <property type="entry name" value="Peptidase_M20A"/>
</dbReference>
<dbReference type="NCBIfam" id="TIGR01246">
    <property type="entry name" value="dapE_proteo"/>
    <property type="match status" value="1"/>
</dbReference>
<dbReference type="NCBIfam" id="NF009557">
    <property type="entry name" value="PRK13009.1"/>
    <property type="match status" value="1"/>
</dbReference>
<dbReference type="PANTHER" id="PTHR43808">
    <property type="entry name" value="ACETYLORNITHINE DEACETYLASE"/>
    <property type="match status" value="1"/>
</dbReference>
<dbReference type="PANTHER" id="PTHR43808:SF31">
    <property type="entry name" value="N-ACETYL-L-CITRULLINE DEACETYLASE"/>
    <property type="match status" value="1"/>
</dbReference>
<dbReference type="Pfam" id="PF07687">
    <property type="entry name" value="M20_dimer"/>
    <property type="match status" value="1"/>
</dbReference>
<dbReference type="Pfam" id="PF01546">
    <property type="entry name" value="Peptidase_M20"/>
    <property type="match status" value="1"/>
</dbReference>
<dbReference type="SUPFAM" id="SSF55031">
    <property type="entry name" value="Bacterial exopeptidase dimerisation domain"/>
    <property type="match status" value="1"/>
</dbReference>
<dbReference type="SUPFAM" id="SSF53187">
    <property type="entry name" value="Zn-dependent exopeptidases"/>
    <property type="match status" value="1"/>
</dbReference>
<dbReference type="PROSITE" id="PS00759">
    <property type="entry name" value="ARGE_DAPE_CPG2_2"/>
    <property type="match status" value="1"/>
</dbReference>
<evidence type="ECO:0000255" key="1">
    <source>
        <dbReference type="HAMAP-Rule" id="MF_01690"/>
    </source>
</evidence>
<evidence type="ECO:0000305" key="2"/>
<comment type="function">
    <text evidence="1">Catalyzes the hydrolysis of N-succinyl-L,L-diaminopimelic acid (SDAP), forming succinate and LL-2,6-diaminopimelate (DAP), an intermediate involved in the bacterial biosynthesis of lysine and meso-diaminopimelic acid, an essential component of bacterial cell walls.</text>
</comment>
<comment type="catalytic activity">
    <reaction evidence="1">
        <text>N-succinyl-(2S,6S)-2,6-diaminopimelate + H2O = (2S,6S)-2,6-diaminopimelate + succinate</text>
        <dbReference type="Rhea" id="RHEA:22608"/>
        <dbReference type="ChEBI" id="CHEBI:15377"/>
        <dbReference type="ChEBI" id="CHEBI:30031"/>
        <dbReference type="ChEBI" id="CHEBI:57609"/>
        <dbReference type="ChEBI" id="CHEBI:58087"/>
        <dbReference type="EC" id="3.5.1.18"/>
    </reaction>
</comment>
<comment type="cofactor">
    <cofactor evidence="1">
        <name>Zn(2+)</name>
        <dbReference type="ChEBI" id="CHEBI:29105"/>
    </cofactor>
    <cofactor evidence="1">
        <name>Co(2+)</name>
        <dbReference type="ChEBI" id="CHEBI:48828"/>
    </cofactor>
    <text evidence="1">Binds 2 Zn(2+) or Co(2+) ions per subunit.</text>
</comment>
<comment type="pathway">
    <text evidence="1">Amino-acid biosynthesis; L-lysine biosynthesis via DAP pathway; LL-2,6-diaminopimelate from (S)-tetrahydrodipicolinate (succinylase route): step 3/3.</text>
</comment>
<comment type="subunit">
    <text evidence="1">Homodimer.</text>
</comment>
<comment type="similarity">
    <text evidence="1">Belongs to the peptidase M20A family. DapE subfamily.</text>
</comment>
<comment type="sequence caution" evidence="2">
    <conflict type="erroneous initiation">
        <sequence resource="EMBL-CDS" id="AAL03885"/>
    </conflict>
</comment>
<protein>
    <recommendedName>
        <fullName evidence="1">Succinyl-diaminopimelate desuccinylase</fullName>
        <shortName evidence="1">SDAP desuccinylase</shortName>
        <ecNumber evidence="1">3.5.1.18</ecNumber>
    </recommendedName>
    <alternativeName>
        <fullName evidence="1">N-succinyl-LL-2,6-diaminoheptanedioate amidohydrolase</fullName>
    </alternativeName>
</protein>
<name>DAPE_RICCN</name>
<organism>
    <name type="scientific">Rickettsia conorii (strain ATCC VR-613 / Malish 7)</name>
    <dbReference type="NCBI Taxonomy" id="272944"/>
    <lineage>
        <taxon>Bacteria</taxon>
        <taxon>Pseudomonadati</taxon>
        <taxon>Pseudomonadota</taxon>
        <taxon>Alphaproteobacteria</taxon>
        <taxon>Rickettsiales</taxon>
        <taxon>Rickettsiaceae</taxon>
        <taxon>Rickettsieae</taxon>
        <taxon>Rickettsia</taxon>
        <taxon>spotted fever group</taxon>
    </lineage>
</organism>